<organism>
    <name type="scientific">Bacillus subtilis (strain 168)</name>
    <dbReference type="NCBI Taxonomy" id="224308"/>
    <lineage>
        <taxon>Bacteria</taxon>
        <taxon>Bacillati</taxon>
        <taxon>Bacillota</taxon>
        <taxon>Bacilli</taxon>
        <taxon>Bacillales</taxon>
        <taxon>Bacillaceae</taxon>
        <taxon>Bacillus</taxon>
    </lineage>
</organism>
<keyword id="KW-0963">Cytoplasm</keyword>
<keyword id="KW-0378">Hydrolase</keyword>
<keyword id="KW-0464">Manganese</keyword>
<keyword id="KW-0904">Protein phosphatase</keyword>
<keyword id="KW-1185">Reference proteome</keyword>
<keyword id="KW-0677">Repeat</keyword>
<keyword id="KW-0749">Sporulation</keyword>
<keyword id="KW-0802">TPR repeat</keyword>
<feature type="chain" id="PRO_0000106435" description="Response regulator aspartate phosphatase A">
    <location>
        <begin position="1"/>
        <end position="378"/>
    </location>
</feature>
<feature type="repeat" description="TPR 1" evidence="10">
    <location>
        <begin position="101"/>
        <end position="137"/>
    </location>
</feature>
<feature type="repeat" description="TPR 2" evidence="1">
    <location>
        <begin position="148"/>
        <end position="181"/>
    </location>
</feature>
<feature type="repeat" description="TPR 3" evidence="10">
    <location>
        <begin position="183"/>
        <end position="215"/>
    </location>
</feature>
<feature type="repeat" description="TPR 4" evidence="1">
    <location>
        <begin position="222"/>
        <end position="255"/>
    </location>
</feature>
<feature type="repeat" description="TPR 5" evidence="1">
    <location>
        <begin position="261"/>
        <end position="294"/>
    </location>
</feature>
<feature type="repeat" description="TPR 6" evidence="1">
    <location>
        <begin position="336"/>
        <end position="369"/>
    </location>
</feature>
<feature type="mutagenesis site" description="Sporulation-defective phenotype." evidence="5">
    <original>D</original>
    <variation>N</variation>
    <location>
        <position position="194"/>
    </location>
</feature>
<feature type="mutagenesis site" description="Retains phosphatase activity, but is insensitive to PhrA inhibition." evidence="4">
    <original>Y</original>
    <variation>A</variation>
    <location>
        <position position="226"/>
    </location>
</feature>
<feature type="mutagenesis site" description="Retains phosphatase activity, but is insensitive to PhrA inhibition." evidence="4">
    <original>N</original>
    <variation>A</variation>
    <location>
        <position position="227"/>
    </location>
</feature>
<feature type="mutagenesis site" description="Retains phosphatase activity, but is insensitive to PhrA inhibition." evidence="4">
    <original>N</original>
    <variation>A</variation>
    <location>
        <position position="230"/>
    </location>
</feature>
<feature type="mutagenesis site" description="Sporulation-defective phenotype. Retains phosphatase activity, but is insensitive to PhrA inhibition." evidence="5 7">
    <original>P</original>
    <variation>L</variation>
    <location>
        <position position="261"/>
    </location>
</feature>
<feature type="mutagenesis site" description="Retains phosphatase activity, but is insensitive to PhrA inhibition." evidence="4">
    <original>H</original>
    <variation>A</variation>
    <location>
        <position position="262"/>
    </location>
</feature>
<feature type="sequence conflict" description="In Ref. 1; CAA40007." evidence="10" ref="1">
    <original>S</original>
    <variation>T</variation>
    <location>
        <position position="162"/>
    </location>
</feature>
<proteinExistence type="evidence at protein level"/>
<name>RAPA_BACSU</name>
<dbReference type="EC" id="3.1.3.-" evidence="2 4 5"/>
<dbReference type="EMBL" id="X56679">
    <property type="protein sequence ID" value="CAA40007.1"/>
    <property type="status" value="ALT_INIT"/>
    <property type="molecule type" value="Genomic_DNA"/>
</dbReference>
<dbReference type="EMBL" id="AF034138">
    <property type="protein sequence ID" value="AAB87511.1"/>
    <property type="molecule type" value="Genomic_DNA"/>
</dbReference>
<dbReference type="EMBL" id="AL009126">
    <property type="protein sequence ID" value="CAB13100.1"/>
    <property type="molecule type" value="Genomic_DNA"/>
</dbReference>
<dbReference type="EMBL" id="AF015825">
    <property type="protein sequence ID" value="AAC46339.1"/>
    <property type="molecule type" value="Genomic_DNA"/>
</dbReference>
<dbReference type="PIR" id="D69688">
    <property type="entry name" value="D69688"/>
</dbReference>
<dbReference type="RefSeq" id="NP_389125.1">
    <property type="nucleotide sequence ID" value="NC_000964.3"/>
</dbReference>
<dbReference type="RefSeq" id="WP_010886491.1">
    <property type="nucleotide sequence ID" value="NZ_OZ025638.1"/>
</dbReference>
<dbReference type="SMR" id="Q00828"/>
<dbReference type="FunCoup" id="Q00828">
    <property type="interactions" value="195"/>
</dbReference>
<dbReference type="IntAct" id="Q00828">
    <property type="interactions" value="3"/>
</dbReference>
<dbReference type="STRING" id="224308.BSU12430"/>
<dbReference type="PaxDb" id="224308-BSU12430"/>
<dbReference type="EnsemblBacteria" id="CAB13100">
    <property type="protein sequence ID" value="CAB13100"/>
    <property type="gene ID" value="BSU_12430"/>
</dbReference>
<dbReference type="GeneID" id="939417"/>
<dbReference type="KEGG" id="bsu:BSU12430"/>
<dbReference type="PATRIC" id="fig|224308.43.peg.1306"/>
<dbReference type="eggNOG" id="COG0457">
    <property type="taxonomic scope" value="Bacteria"/>
</dbReference>
<dbReference type="InParanoid" id="Q00828"/>
<dbReference type="OrthoDB" id="2957368at2"/>
<dbReference type="PhylomeDB" id="Q00828"/>
<dbReference type="BioCyc" id="BSUB:BSU12430-MONOMER"/>
<dbReference type="Proteomes" id="UP000001570">
    <property type="component" value="Chromosome"/>
</dbReference>
<dbReference type="GO" id="GO:0005737">
    <property type="term" value="C:cytoplasm"/>
    <property type="evidence" value="ECO:0007669"/>
    <property type="project" value="UniProtKB-SubCell"/>
</dbReference>
<dbReference type="GO" id="GO:0004721">
    <property type="term" value="F:phosphoprotein phosphatase activity"/>
    <property type="evidence" value="ECO:0007669"/>
    <property type="project" value="UniProtKB-KW"/>
</dbReference>
<dbReference type="GO" id="GO:0030435">
    <property type="term" value="P:sporulation resulting in formation of a cellular spore"/>
    <property type="evidence" value="ECO:0007669"/>
    <property type="project" value="UniProtKB-KW"/>
</dbReference>
<dbReference type="Gene3D" id="1.25.40.10">
    <property type="entry name" value="Tetratricopeptide repeat domain"/>
    <property type="match status" value="1"/>
</dbReference>
<dbReference type="InterPro" id="IPR051476">
    <property type="entry name" value="Bac_ResReg_Asp_Phosphatase"/>
</dbReference>
<dbReference type="InterPro" id="IPR011990">
    <property type="entry name" value="TPR-like_helical_dom_sf"/>
</dbReference>
<dbReference type="InterPro" id="IPR019734">
    <property type="entry name" value="TPR_rpt"/>
</dbReference>
<dbReference type="PANTHER" id="PTHR46630">
    <property type="entry name" value="TETRATRICOPEPTIDE REPEAT PROTEIN 29"/>
    <property type="match status" value="1"/>
</dbReference>
<dbReference type="PANTHER" id="PTHR46630:SF1">
    <property type="entry name" value="TETRATRICOPEPTIDE REPEAT PROTEIN 29"/>
    <property type="match status" value="1"/>
</dbReference>
<dbReference type="Pfam" id="PF18801">
    <property type="entry name" value="RapH_N"/>
    <property type="match status" value="1"/>
</dbReference>
<dbReference type="Pfam" id="PF13424">
    <property type="entry name" value="TPR_12"/>
    <property type="match status" value="1"/>
</dbReference>
<dbReference type="SMART" id="SM00028">
    <property type="entry name" value="TPR"/>
    <property type="match status" value="2"/>
</dbReference>
<dbReference type="SUPFAM" id="SSF48452">
    <property type="entry name" value="TPR-like"/>
    <property type="match status" value="1"/>
</dbReference>
<dbReference type="PROSITE" id="PS50005">
    <property type="entry name" value="TPR"/>
    <property type="match status" value="3"/>
</dbReference>
<dbReference type="PROSITE" id="PS50293">
    <property type="entry name" value="TPR_REGION"/>
    <property type="match status" value="2"/>
</dbReference>
<comment type="function">
    <text evidence="2 3 4 5">Involved in the regulation of sporulation (PubMed:11923303, PubMed:1624431, PubMed:22267516, PubMed:8001132). Acts as a phosphatase that specifically dephosphorylates the sporulation initiation phosphotransferase Spo0F and inhibits its activity (PubMed:11923303, PubMed:22267516, PubMed:8001132).</text>
</comment>
<comment type="cofactor">
    <cofactor evidence="2">
        <name>Mn(2+)</name>
        <dbReference type="ChEBI" id="CHEBI:29035"/>
    </cofactor>
    <text evidence="2">Can also use Mg(2+) and Ca(2+), with lower efficiency.</text>
</comment>
<comment type="activity regulation">
    <text evidence="2 4 6 7">Phosphatase activity is inhibited by the phosphatase regulator PhrA (PubMed:11923303, PubMed:22267516, PubMed:8643670, PubMed:9238025). Interaction with PhrA dissociates the RapA-Spo0F complex (PubMed:11923303). Activity is abolished in the presence of EDTA (PubMed:11923303).</text>
</comment>
<comment type="biophysicochemical properties">
    <kinetics>
        <KM evidence="4">1.2 uM for phospho-Spo0F</KM>
    </kinetics>
    <phDependence>
        <text evidence="2">Optimum pH is 7.0.</text>
    </phDependence>
</comment>
<comment type="subunit">
    <text evidence="2 4">Homodimer (PubMed:11923303). Interacts with its substrate, phosphorylated Spo0F, and its inhibitor, the PhrA pentapeptide (PubMed:11923303, PubMed:22267516). The RapA dimer forms a stable complex with two molecules of phosphorylated Spo0F (PubMed:11923303). The complex is dissociated after dephosphorylation of Spo0F by RapA (PubMed:11923303).</text>
</comment>
<comment type="subcellular location">
    <subcellularLocation>
        <location evidence="10">Cytoplasm</location>
    </subcellularLocation>
</comment>
<comment type="induction">
    <text>Under all conditions of nutrient limitation, and by addition of decoyinine.</text>
</comment>
<comment type="domain">
    <text evidence="4">The N-terminal half of RapA contains the necessary structural determinants for substrate binding and enzymatic activity, and the C-terminal half contains the binding site for PhrA peptide (PubMed:22267516). The central TPR3 to TPR5 repeats provide the binding specificity toward the Phr peptide inhibitor (PubMed:22267516).</text>
</comment>
<comment type="similarity">
    <text evidence="10">Belongs to the Rap family.</text>
</comment>
<comment type="sequence caution" evidence="10">
    <conflict type="erroneous initiation">
        <sequence resource="EMBL-CDS" id="CAA40007"/>
    </conflict>
</comment>
<reference key="1">
    <citation type="journal article" date="1992" name="J. Bacteriol.">
        <title>Transcriptional regulation of Bacillus subtilis glucose starvation-inducible genes: control of gsiA by the ComP-ComA signal transduction system.</title>
        <authorList>
            <person name="Mueller J.P."/>
            <person name="Bukusoglu G."/>
            <person name="Sonenshein A.L."/>
        </authorList>
    </citation>
    <scope>NUCLEOTIDE SEQUENCE [GENOMIC DNA]</scope>
    <source>
        <strain>168</strain>
    </source>
</reference>
<reference key="2">
    <citation type="submission" date="1997-11" db="EMBL/GenBank/DDBJ databases">
        <title>Sequencing and characterisation of the region comprising XlyB, the second lytic enzyme of the defective prophage PBSX of Bacillus subtilis.</title>
        <authorList>
            <person name="da Silva E."/>
            <person name="Karamata D."/>
        </authorList>
    </citation>
    <scope>NUCLEOTIDE SEQUENCE [GENOMIC DNA]</scope>
    <source>
        <strain>168</strain>
    </source>
</reference>
<reference key="3">
    <citation type="journal article" date="1997" name="Nature">
        <title>The complete genome sequence of the Gram-positive bacterium Bacillus subtilis.</title>
        <authorList>
            <person name="Kunst F."/>
            <person name="Ogasawara N."/>
            <person name="Moszer I."/>
            <person name="Albertini A.M."/>
            <person name="Alloni G."/>
            <person name="Azevedo V."/>
            <person name="Bertero M.G."/>
            <person name="Bessieres P."/>
            <person name="Bolotin A."/>
            <person name="Borchert S."/>
            <person name="Borriss R."/>
            <person name="Boursier L."/>
            <person name="Brans A."/>
            <person name="Braun M."/>
            <person name="Brignell S.C."/>
            <person name="Bron S."/>
            <person name="Brouillet S."/>
            <person name="Bruschi C.V."/>
            <person name="Caldwell B."/>
            <person name="Capuano V."/>
            <person name="Carter N.M."/>
            <person name="Choi S.-K."/>
            <person name="Codani J.-J."/>
            <person name="Connerton I.F."/>
            <person name="Cummings N.J."/>
            <person name="Daniel R.A."/>
            <person name="Denizot F."/>
            <person name="Devine K.M."/>
            <person name="Duesterhoeft A."/>
            <person name="Ehrlich S.D."/>
            <person name="Emmerson P.T."/>
            <person name="Entian K.-D."/>
            <person name="Errington J."/>
            <person name="Fabret C."/>
            <person name="Ferrari E."/>
            <person name="Foulger D."/>
            <person name="Fritz C."/>
            <person name="Fujita M."/>
            <person name="Fujita Y."/>
            <person name="Fuma S."/>
            <person name="Galizzi A."/>
            <person name="Galleron N."/>
            <person name="Ghim S.-Y."/>
            <person name="Glaser P."/>
            <person name="Goffeau A."/>
            <person name="Golightly E.J."/>
            <person name="Grandi G."/>
            <person name="Guiseppi G."/>
            <person name="Guy B.J."/>
            <person name="Haga K."/>
            <person name="Haiech J."/>
            <person name="Harwood C.R."/>
            <person name="Henaut A."/>
            <person name="Hilbert H."/>
            <person name="Holsappel S."/>
            <person name="Hosono S."/>
            <person name="Hullo M.-F."/>
            <person name="Itaya M."/>
            <person name="Jones L.-M."/>
            <person name="Joris B."/>
            <person name="Karamata D."/>
            <person name="Kasahara Y."/>
            <person name="Klaerr-Blanchard M."/>
            <person name="Klein C."/>
            <person name="Kobayashi Y."/>
            <person name="Koetter P."/>
            <person name="Koningstein G."/>
            <person name="Krogh S."/>
            <person name="Kumano M."/>
            <person name="Kurita K."/>
            <person name="Lapidus A."/>
            <person name="Lardinois S."/>
            <person name="Lauber J."/>
            <person name="Lazarevic V."/>
            <person name="Lee S.-M."/>
            <person name="Levine A."/>
            <person name="Liu H."/>
            <person name="Masuda S."/>
            <person name="Mauel C."/>
            <person name="Medigue C."/>
            <person name="Medina N."/>
            <person name="Mellado R.P."/>
            <person name="Mizuno M."/>
            <person name="Moestl D."/>
            <person name="Nakai S."/>
            <person name="Noback M."/>
            <person name="Noone D."/>
            <person name="O'Reilly M."/>
            <person name="Ogawa K."/>
            <person name="Ogiwara A."/>
            <person name="Oudega B."/>
            <person name="Park S.-H."/>
            <person name="Parro V."/>
            <person name="Pohl T.M."/>
            <person name="Portetelle D."/>
            <person name="Porwollik S."/>
            <person name="Prescott A.M."/>
            <person name="Presecan E."/>
            <person name="Pujic P."/>
            <person name="Purnelle B."/>
            <person name="Rapoport G."/>
            <person name="Rey M."/>
            <person name="Reynolds S."/>
            <person name="Rieger M."/>
            <person name="Rivolta C."/>
            <person name="Rocha E."/>
            <person name="Roche B."/>
            <person name="Rose M."/>
            <person name="Sadaie Y."/>
            <person name="Sato T."/>
            <person name="Scanlan E."/>
            <person name="Schleich S."/>
            <person name="Schroeter R."/>
            <person name="Scoffone F."/>
            <person name="Sekiguchi J."/>
            <person name="Sekowska A."/>
            <person name="Seror S.J."/>
            <person name="Serror P."/>
            <person name="Shin B.-S."/>
            <person name="Soldo B."/>
            <person name="Sorokin A."/>
            <person name="Tacconi E."/>
            <person name="Takagi T."/>
            <person name="Takahashi H."/>
            <person name="Takemaru K."/>
            <person name="Takeuchi M."/>
            <person name="Tamakoshi A."/>
            <person name="Tanaka T."/>
            <person name="Terpstra P."/>
            <person name="Tognoni A."/>
            <person name="Tosato V."/>
            <person name="Uchiyama S."/>
            <person name="Vandenbol M."/>
            <person name="Vannier F."/>
            <person name="Vassarotti A."/>
            <person name="Viari A."/>
            <person name="Wambutt R."/>
            <person name="Wedler E."/>
            <person name="Wedler H."/>
            <person name="Weitzenegger T."/>
            <person name="Winters P."/>
            <person name="Wipat A."/>
            <person name="Yamamoto H."/>
            <person name="Yamane K."/>
            <person name="Yasumoto K."/>
            <person name="Yata K."/>
            <person name="Yoshida K."/>
            <person name="Yoshikawa H.-F."/>
            <person name="Zumstein E."/>
            <person name="Yoshikawa H."/>
            <person name="Danchin A."/>
        </authorList>
    </citation>
    <scope>NUCLEOTIDE SEQUENCE [LARGE SCALE GENOMIC DNA]</scope>
    <source>
        <strain>168</strain>
    </source>
</reference>
<reference key="4">
    <citation type="journal article" date="1998" name="Microbiology">
        <title>A 35.7 kb DNA fragment from the Bacillus subtilis chromosome containing a putative 12.3 kb operon involved in hexuronate catabolism and a perfectly symmetrical hypothetical catabolite-responsive element.</title>
        <authorList>
            <person name="Rivolta C."/>
            <person name="Soldo B."/>
            <person name="Lazarevic V."/>
            <person name="Joris B."/>
            <person name="Mauel C."/>
            <person name="Karamata D."/>
        </authorList>
    </citation>
    <scope>NUCLEOTIDE SEQUENCE [GENOMIC DNA] OF 1-211</scope>
    <source>
        <strain>168</strain>
    </source>
</reference>
<reference key="5">
    <citation type="journal article" date="1992" name="J. Bacteriol.">
        <title>Role of the Bacillus subtilis gsiA gene in regulation of early sporulation gene expression.</title>
        <authorList>
            <person name="Mueller J.P."/>
            <person name="Sonenshein A.L."/>
        </authorList>
    </citation>
    <scope>FUNCTION</scope>
</reference>
<reference key="6">
    <citation type="journal article" date="1994" name="Cell">
        <title>Multiple protein-aspartate phosphatases provide a mechanism for the integration of diverse signals in the control of development in B. subtilis.</title>
        <authorList>
            <person name="Perego M."/>
            <person name="Hanstein C."/>
            <person name="Welsh K."/>
            <person name="Djavakhishvili T."/>
            <person name="Glaser P."/>
            <person name="Hoch J."/>
        </authorList>
    </citation>
    <scope>FUNCTION AS A PHOSPHATASE</scope>
    <scope>CATALYTIC ACTIVITY</scope>
    <scope>MUTAGENESIS OF ASP-194 AND PRO-261</scope>
    <source>
        <strain>168 / JH642</strain>
    </source>
</reference>
<reference key="7">
    <citation type="journal article" date="1996" name="Proc. Natl. Acad. Sci. U.S.A.">
        <title>Cell-cell communication regulates the effects of protein aspartate phosphatases on the phosphorelay controlling development in Bacillus subtilis.</title>
        <authorList>
            <person name="Perego M."/>
            <person name="Hoch J.A."/>
        </authorList>
    </citation>
    <scope>ACTIVITY REGULATION</scope>
    <source>
        <strain>168 / JH642</strain>
    </source>
</reference>
<reference key="8">
    <citation type="journal article" date="1997" name="Proc. Natl. Acad. Sci. U.S.A.">
        <title>A peptide export-import control circuit modulating bacterial development regulates protein phosphatases of the phosphorelay.</title>
        <authorList>
            <person name="Perego M."/>
        </authorList>
    </citation>
    <scope>ACTIVITY REGULATION</scope>
    <scope>MUTAGENESIS OF PRO-261</scope>
    <source>
        <strain>168 / JH642</strain>
    </source>
</reference>
<reference key="9">
    <citation type="journal article" date="2002" name="J. Biol. Chem.">
        <title>Biochemical characterization of aspartyl phosphate phosphatase interaction with a phosphorylated response regulator and its inhibition by a pentapeptide.</title>
        <authorList>
            <person name="Ishikawa S."/>
            <person name="Core L."/>
            <person name="Perego M."/>
        </authorList>
    </citation>
    <scope>FUNCTION</scope>
    <scope>CATALYTIC ACTIVITY</scope>
    <scope>COFACTOR</scope>
    <scope>ACTIVITY REGULATION</scope>
    <scope>BIOPHYSICOCHEMICAL PROPERTIES</scope>
    <scope>SUBUNIT</scope>
    <scope>INTERACTION WITH SPO0F AND PHRA</scope>
</reference>
<reference key="10">
    <citation type="journal article" date="2012" name="J. Bacteriol.">
        <title>Bacillus subtilis RapA phosphatase domain interaction with its substrate, phosphorylated Spo0F, and its inhibitor, the PhrA peptide.</title>
        <authorList>
            <person name="Diaz A.R."/>
            <person name="Core L.J."/>
            <person name="Jiang M."/>
            <person name="Morelli M."/>
            <person name="Chiang C.H."/>
            <person name="Szurmant H."/>
            <person name="Perego M."/>
        </authorList>
    </citation>
    <scope>FUNCTION</scope>
    <scope>CATALYTIC ACTIVITY</scope>
    <scope>ACTIVITY REGULATION</scope>
    <scope>BIOPHYSICOCHEMICAL PROPERTIES</scope>
    <scope>INTERACTION WITH SPO0F AND PHRA</scope>
    <scope>DOMAIN</scope>
    <scope>MUTAGENESIS OF TYR-226; ASN-227; ASN-230 AND HIS-262</scope>
    <source>
        <strain>168 / JH642</strain>
    </source>
</reference>
<evidence type="ECO:0000255" key="1"/>
<evidence type="ECO:0000269" key="2">
    <source>
    </source>
</evidence>
<evidence type="ECO:0000269" key="3">
    <source>
    </source>
</evidence>
<evidence type="ECO:0000269" key="4">
    <source>
    </source>
</evidence>
<evidence type="ECO:0000269" key="5">
    <source>
    </source>
</evidence>
<evidence type="ECO:0000269" key="6">
    <source>
    </source>
</evidence>
<evidence type="ECO:0000269" key="7">
    <source>
    </source>
</evidence>
<evidence type="ECO:0000303" key="8">
    <source>
    </source>
</evidence>
<evidence type="ECO:0000303" key="9">
    <source>
    </source>
</evidence>
<evidence type="ECO:0000305" key="10"/>
<protein>
    <recommendedName>
        <fullName evidence="9">Response regulator aspartate phosphatase A</fullName>
        <ecNumber evidence="2 4 5">3.1.3.-</ecNumber>
    </recommendedName>
    <alternativeName>
        <fullName>Glucose starvation-inducible protein A</fullName>
    </alternativeName>
    <alternativeName>
        <fullName evidence="10">Protein-aspartate phosphatase RapA</fullName>
    </alternativeName>
    <alternativeName>
        <fullName>Stage 0 sporulation protein L</fullName>
    </alternativeName>
</protein>
<gene>
    <name evidence="9" type="primary">rapA</name>
    <name evidence="8" type="synonym">gsiAA</name>
    <name evidence="9" type="synonym">spo0L</name>
    <name type="ordered locus">BSU12430</name>
</gene>
<accession>Q00828</accession>
<accession>O34473</accession>
<sequence length="378" mass="44974">MRMKQTIPSSYVGLKINEWYTHIRQFHVAEAERVKLEVEREIEDMEEDQDLLLYYSLMEFRHRVMLDYIKPFGEDTSQLEFSELLEDIEGNQYKLTGLLEYYFNFFRGMYEFKQKMFVSAMMYYKRAEKNLALVSDDIEKAEFAFKMAEIFYNLKQTYVSMSYAVQALETYQMYETYTVRRIQCEFVIAGNYDDMQYPERALPHLELALDLAKKEGNPRLISSALYNLGNCYEKMGELQKAAEYFGKSVSICKSEKFDNLPHSIYSLTQVLYKQKNDAEAQKKYREGLEIARQYSDELFVELFQFLHALYGKNIDTESVSHTFQFLEEHMLYPYIEELAHDAAQFYIENGQPEKALSFYEKMVHAQKQIQRGDCLYEI</sequence>